<organism>
    <name type="scientific">Aliarcobacter butzleri (strain RM4018)</name>
    <name type="common">Arcobacter butzleri</name>
    <dbReference type="NCBI Taxonomy" id="367737"/>
    <lineage>
        <taxon>Bacteria</taxon>
        <taxon>Pseudomonadati</taxon>
        <taxon>Campylobacterota</taxon>
        <taxon>Epsilonproteobacteria</taxon>
        <taxon>Campylobacterales</taxon>
        <taxon>Arcobacteraceae</taxon>
        <taxon>Aliarcobacter</taxon>
    </lineage>
</organism>
<sequence length="118" mass="13787">MPRVKTGVVRRRRHKKVLKAARGFFSGRRKHFRKAKEQLERSLVYAFRDRRQKKRDIRKLWIIRINAACRLNDINYSRFMNGLKLSGLELDRKILADMAMNDSAAFASLVATAKAALK</sequence>
<proteinExistence type="inferred from homology"/>
<dbReference type="EMBL" id="CP000361">
    <property type="protein sequence ID" value="ABV66359.1"/>
    <property type="molecule type" value="Genomic_DNA"/>
</dbReference>
<dbReference type="RefSeq" id="WP_004510117.1">
    <property type="nucleotide sequence ID" value="NC_009850.1"/>
</dbReference>
<dbReference type="SMR" id="A8EQY5"/>
<dbReference type="STRING" id="367737.Abu_0074"/>
<dbReference type="GeneID" id="24304013"/>
<dbReference type="KEGG" id="abu:Abu_0074"/>
<dbReference type="eggNOG" id="COG0292">
    <property type="taxonomic scope" value="Bacteria"/>
</dbReference>
<dbReference type="HOGENOM" id="CLU_123265_0_1_7"/>
<dbReference type="Proteomes" id="UP000001136">
    <property type="component" value="Chromosome"/>
</dbReference>
<dbReference type="GO" id="GO:1990904">
    <property type="term" value="C:ribonucleoprotein complex"/>
    <property type="evidence" value="ECO:0007669"/>
    <property type="project" value="UniProtKB-KW"/>
</dbReference>
<dbReference type="GO" id="GO:0005840">
    <property type="term" value="C:ribosome"/>
    <property type="evidence" value="ECO:0007669"/>
    <property type="project" value="UniProtKB-KW"/>
</dbReference>
<dbReference type="GO" id="GO:0019843">
    <property type="term" value="F:rRNA binding"/>
    <property type="evidence" value="ECO:0007669"/>
    <property type="project" value="UniProtKB-UniRule"/>
</dbReference>
<dbReference type="GO" id="GO:0003735">
    <property type="term" value="F:structural constituent of ribosome"/>
    <property type="evidence" value="ECO:0007669"/>
    <property type="project" value="InterPro"/>
</dbReference>
<dbReference type="GO" id="GO:0000027">
    <property type="term" value="P:ribosomal large subunit assembly"/>
    <property type="evidence" value="ECO:0007669"/>
    <property type="project" value="UniProtKB-UniRule"/>
</dbReference>
<dbReference type="GO" id="GO:0006412">
    <property type="term" value="P:translation"/>
    <property type="evidence" value="ECO:0007669"/>
    <property type="project" value="InterPro"/>
</dbReference>
<dbReference type="CDD" id="cd07026">
    <property type="entry name" value="Ribosomal_L20"/>
    <property type="match status" value="1"/>
</dbReference>
<dbReference type="FunFam" id="1.10.1900.20:FF:000001">
    <property type="entry name" value="50S ribosomal protein L20"/>
    <property type="match status" value="1"/>
</dbReference>
<dbReference type="Gene3D" id="6.10.160.10">
    <property type="match status" value="1"/>
</dbReference>
<dbReference type="Gene3D" id="1.10.1900.20">
    <property type="entry name" value="Ribosomal protein L20"/>
    <property type="match status" value="1"/>
</dbReference>
<dbReference type="HAMAP" id="MF_00382">
    <property type="entry name" value="Ribosomal_bL20"/>
    <property type="match status" value="1"/>
</dbReference>
<dbReference type="InterPro" id="IPR005813">
    <property type="entry name" value="Ribosomal_bL20"/>
</dbReference>
<dbReference type="InterPro" id="IPR049946">
    <property type="entry name" value="RIBOSOMAL_L20_CS"/>
</dbReference>
<dbReference type="InterPro" id="IPR035566">
    <property type="entry name" value="Ribosomal_protein_bL20_C"/>
</dbReference>
<dbReference type="NCBIfam" id="TIGR01032">
    <property type="entry name" value="rplT_bact"/>
    <property type="match status" value="1"/>
</dbReference>
<dbReference type="PANTHER" id="PTHR10986">
    <property type="entry name" value="39S RIBOSOMAL PROTEIN L20"/>
    <property type="match status" value="1"/>
</dbReference>
<dbReference type="Pfam" id="PF00453">
    <property type="entry name" value="Ribosomal_L20"/>
    <property type="match status" value="1"/>
</dbReference>
<dbReference type="PRINTS" id="PR00062">
    <property type="entry name" value="RIBOSOMALL20"/>
</dbReference>
<dbReference type="SUPFAM" id="SSF74731">
    <property type="entry name" value="Ribosomal protein L20"/>
    <property type="match status" value="1"/>
</dbReference>
<dbReference type="PROSITE" id="PS00937">
    <property type="entry name" value="RIBOSOMAL_L20"/>
    <property type="match status" value="1"/>
</dbReference>
<protein>
    <recommendedName>
        <fullName evidence="1">Large ribosomal subunit protein bL20</fullName>
    </recommendedName>
    <alternativeName>
        <fullName evidence="2">50S ribosomal protein L20</fullName>
    </alternativeName>
</protein>
<evidence type="ECO:0000255" key="1">
    <source>
        <dbReference type="HAMAP-Rule" id="MF_00382"/>
    </source>
</evidence>
<evidence type="ECO:0000305" key="2"/>
<keyword id="KW-1185">Reference proteome</keyword>
<keyword id="KW-0687">Ribonucleoprotein</keyword>
<keyword id="KW-0689">Ribosomal protein</keyword>
<keyword id="KW-0694">RNA-binding</keyword>
<keyword id="KW-0699">rRNA-binding</keyword>
<accession>A8EQY5</accession>
<feature type="chain" id="PRO_1000060685" description="Large ribosomal subunit protein bL20">
    <location>
        <begin position="1"/>
        <end position="118"/>
    </location>
</feature>
<name>RL20_ALIB4</name>
<gene>
    <name evidence="1" type="primary">rplT</name>
    <name type="ordered locus">Abu_0074</name>
</gene>
<reference key="1">
    <citation type="journal article" date="2007" name="PLoS ONE">
        <title>The complete genome sequence and analysis of the Epsilonproteobacterium Arcobacter butzleri.</title>
        <authorList>
            <person name="Miller W.G."/>
            <person name="Parker C.T."/>
            <person name="Rubenfield M."/>
            <person name="Mendz G.L."/>
            <person name="Woesten M.M.S.M."/>
            <person name="Ussery D.W."/>
            <person name="Stolz J.F."/>
            <person name="Binnewies T.T."/>
            <person name="Hallin P.F."/>
            <person name="Wang G."/>
            <person name="Malek J.A."/>
            <person name="Rogosin A."/>
            <person name="Stanker L.H."/>
            <person name="Mandrell R.E."/>
        </authorList>
    </citation>
    <scope>NUCLEOTIDE SEQUENCE [LARGE SCALE GENOMIC DNA]</scope>
    <source>
        <strain>RM4018</strain>
    </source>
</reference>
<comment type="function">
    <text evidence="1">Binds directly to 23S ribosomal RNA and is necessary for the in vitro assembly process of the 50S ribosomal subunit. It is not involved in the protein synthesizing functions of that subunit.</text>
</comment>
<comment type="similarity">
    <text evidence="1">Belongs to the bacterial ribosomal protein bL20 family.</text>
</comment>